<evidence type="ECO:0000250" key="1"/>
<evidence type="ECO:0000250" key="2">
    <source>
        <dbReference type="UniProtKB" id="Q9NVM4"/>
    </source>
</evidence>
<evidence type="ECO:0000255" key="3">
    <source>
        <dbReference type="PROSITE-ProRule" id="PRU01015"/>
    </source>
</evidence>
<proteinExistence type="evidence at transcript level"/>
<dbReference type="EC" id="2.1.1.321" evidence="2"/>
<dbReference type="EMBL" id="BC059311">
    <property type="protein sequence ID" value="AAH59311.1"/>
    <property type="molecule type" value="mRNA"/>
</dbReference>
<dbReference type="RefSeq" id="NP_001080010.1">
    <property type="nucleotide sequence ID" value="NM_001086541.1"/>
</dbReference>
<dbReference type="SMR" id="Q6PCI6"/>
<dbReference type="DNASU" id="379700"/>
<dbReference type="GeneID" id="379700"/>
<dbReference type="KEGG" id="xla:379700"/>
<dbReference type="AGR" id="Xenbase:XB-GENE-974631"/>
<dbReference type="CTD" id="379700"/>
<dbReference type="Xenbase" id="XB-GENE-974631">
    <property type="gene designation" value="prmt7.L"/>
</dbReference>
<dbReference type="OMA" id="CHHDEYS"/>
<dbReference type="OrthoDB" id="412876at2759"/>
<dbReference type="Proteomes" id="UP000186698">
    <property type="component" value="Chromosome 4L"/>
</dbReference>
<dbReference type="Bgee" id="379700">
    <property type="expression patterns" value="Expressed in egg cell and 19 other cell types or tissues"/>
</dbReference>
<dbReference type="GO" id="GO:0005829">
    <property type="term" value="C:cytosol"/>
    <property type="evidence" value="ECO:0000250"/>
    <property type="project" value="UniProtKB"/>
</dbReference>
<dbReference type="GO" id="GO:0005634">
    <property type="term" value="C:nucleus"/>
    <property type="evidence" value="ECO:0000250"/>
    <property type="project" value="UniProtKB"/>
</dbReference>
<dbReference type="GO" id="GO:0044020">
    <property type="term" value="F:histone H4R3 methyltransferase activity"/>
    <property type="evidence" value="ECO:0000250"/>
    <property type="project" value="UniProtKB"/>
</dbReference>
<dbReference type="GO" id="GO:0042054">
    <property type="term" value="F:histone methyltransferase activity"/>
    <property type="evidence" value="ECO:0000318"/>
    <property type="project" value="GO_Central"/>
</dbReference>
<dbReference type="GO" id="GO:0016274">
    <property type="term" value="F:protein-arginine N-methyltransferase activity"/>
    <property type="evidence" value="ECO:0000318"/>
    <property type="project" value="GO_Central"/>
</dbReference>
<dbReference type="GO" id="GO:0035241">
    <property type="term" value="F:protein-arginine omega-N monomethyltransferase activity"/>
    <property type="evidence" value="ECO:0007669"/>
    <property type="project" value="UniProtKB-EC"/>
</dbReference>
<dbReference type="GO" id="GO:0035243">
    <property type="term" value="F:protein-arginine omega-N symmetric methyltransferase activity"/>
    <property type="evidence" value="ECO:0000250"/>
    <property type="project" value="UniProtKB"/>
</dbReference>
<dbReference type="GO" id="GO:0006338">
    <property type="term" value="P:chromatin remodeling"/>
    <property type="evidence" value="ECO:0000318"/>
    <property type="project" value="GO_Central"/>
</dbReference>
<dbReference type="GO" id="GO:0071514">
    <property type="term" value="P:genomic imprinting"/>
    <property type="evidence" value="ECO:0000250"/>
    <property type="project" value="UniProtKB"/>
</dbReference>
<dbReference type="GO" id="GO:0018216">
    <property type="term" value="P:peptidyl-arginine methylation"/>
    <property type="evidence" value="ECO:0000250"/>
    <property type="project" value="UniProtKB"/>
</dbReference>
<dbReference type="GO" id="GO:0006355">
    <property type="term" value="P:regulation of DNA-templated transcription"/>
    <property type="evidence" value="ECO:0000318"/>
    <property type="project" value="GO_Central"/>
</dbReference>
<dbReference type="GO" id="GO:0000387">
    <property type="term" value="P:spliceosomal snRNP assembly"/>
    <property type="evidence" value="ECO:0000250"/>
    <property type="project" value="UniProtKB"/>
</dbReference>
<dbReference type="CDD" id="cd02440">
    <property type="entry name" value="AdoMet_MTases"/>
    <property type="match status" value="1"/>
</dbReference>
<dbReference type="FunFam" id="2.70.160.11:FF:000010">
    <property type="entry name" value="Protein arginine N-methyltransferase"/>
    <property type="match status" value="1"/>
</dbReference>
<dbReference type="FunFam" id="2.70.160.11:FF:000004">
    <property type="entry name" value="Protein arginine N-methyltransferase 7"/>
    <property type="match status" value="1"/>
</dbReference>
<dbReference type="FunFam" id="3.40.50.150:FF:000070">
    <property type="entry name" value="Protein arginine N-methyltransferase 7"/>
    <property type="match status" value="1"/>
</dbReference>
<dbReference type="FunFam" id="3.40.50.150:FF:000071">
    <property type="entry name" value="Protein arginine N-methyltransferase 7"/>
    <property type="match status" value="1"/>
</dbReference>
<dbReference type="Gene3D" id="2.70.160.11">
    <property type="entry name" value="Hnrnp arginine n-methyltransferase1"/>
    <property type="match status" value="2"/>
</dbReference>
<dbReference type="Gene3D" id="3.40.50.150">
    <property type="entry name" value="Vaccinia Virus protein VP39"/>
    <property type="match status" value="2"/>
</dbReference>
<dbReference type="InterPro" id="IPR025799">
    <property type="entry name" value="Arg_MeTrfase"/>
</dbReference>
<dbReference type="InterPro" id="IPR014644">
    <property type="entry name" value="MeTrfase_PRMT7"/>
</dbReference>
<dbReference type="InterPro" id="IPR055135">
    <property type="entry name" value="PRMT_dom"/>
</dbReference>
<dbReference type="InterPro" id="IPR029063">
    <property type="entry name" value="SAM-dependent_MTases_sf"/>
</dbReference>
<dbReference type="PANTHER" id="PTHR11006">
    <property type="entry name" value="PROTEIN ARGININE N-METHYLTRANSFERASE"/>
    <property type="match status" value="1"/>
</dbReference>
<dbReference type="PANTHER" id="PTHR11006:SF4">
    <property type="entry name" value="PROTEIN ARGININE N-METHYLTRANSFERASE 7"/>
    <property type="match status" value="1"/>
</dbReference>
<dbReference type="Pfam" id="PF06325">
    <property type="entry name" value="PrmA"/>
    <property type="match status" value="1"/>
</dbReference>
<dbReference type="Pfam" id="PF22528">
    <property type="entry name" value="PRMT_C"/>
    <property type="match status" value="2"/>
</dbReference>
<dbReference type="PIRSF" id="PIRSF036946">
    <property type="entry name" value="Arg_N-mtase"/>
    <property type="match status" value="1"/>
</dbReference>
<dbReference type="SUPFAM" id="SSF53335">
    <property type="entry name" value="S-adenosyl-L-methionine-dependent methyltransferases"/>
    <property type="match status" value="2"/>
</dbReference>
<dbReference type="PROSITE" id="PS51678">
    <property type="entry name" value="SAM_MT_PRMT"/>
    <property type="match status" value="2"/>
</dbReference>
<protein>
    <recommendedName>
        <fullName>Protein arginine N-methyltransferase 7</fullName>
        <ecNumber evidence="2">2.1.1.321</ecNumber>
    </recommendedName>
    <alternativeName>
        <fullName>Histone-arginine N-methyltransferase PRMT7</fullName>
    </alternativeName>
    <alternativeName>
        <fullName>[Myelin basic protein]-arginine N-methyltransferase PRMT7</fullName>
    </alternativeName>
</protein>
<name>ANM7_XENLA</name>
<feature type="chain" id="PRO_0000373905" description="Protein arginine N-methyltransferase 7">
    <location>
        <begin position="1"/>
        <end position="685"/>
    </location>
</feature>
<feature type="domain" description="SAM-dependent MTase PRMT-type 1" evidence="3">
    <location>
        <begin position="14"/>
        <end position="341"/>
    </location>
</feature>
<feature type="domain" description="SAM-dependent MTase PRMT-type 2" evidence="3">
    <location>
        <begin position="353"/>
        <end position="680"/>
    </location>
</feature>
<feature type="active site" evidence="1">
    <location>
        <position position="144"/>
    </location>
</feature>
<feature type="active site" evidence="1">
    <location>
        <position position="153"/>
    </location>
</feature>
<comment type="function">
    <text evidence="2">Arginine methyltransferase that can both catalyze the formation of omega-N monomethylarginine (MMA) and symmetrical dimethylarginine (sDMA), with a preference for the formation of MMA. Specifically mediates the symmetrical dimethylation of arginine residues in the small nuclear ribonucleoproteins Sm D1 (SNRPD1) and Sm D3 (SNRPD3); such methylation being required for the assembly and biogenesis of snRNP core particles. Specifically mediates the symmetric dimethylation of histone H4 'Arg-3' to form H4R3me2s. Plays a role in gene imprinting by being recruited by CTCFL at the H19 imprinted control region (ICR) and methylating histone H4 to form H4R3me2s, possibly leading to recruit DNA methyltransferases at these sites. May also play a role in embryonic stem cell (ESC) pluripotency. Also able to mediate the arginine methylation of histone H2A and myelin basic protein (MBP) in vitro; the relevance of such results is however unclear in vivo.</text>
</comment>
<comment type="catalytic activity">
    <reaction evidence="2">
        <text>L-arginyl-[protein] + S-adenosyl-L-methionine = N(omega)-methyl-L-arginyl-[protein] + S-adenosyl-L-homocysteine + H(+)</text>
        <dbReference type="Rhea" id="RHEA:48100"/>
        <dbReference type="Rhea" id="RHEA-COMP:10532"/>
        <dbReference type="Rhea" id="RHEA-COMP:11990"/>
        <dbReference type="ChEBI" id="CHEBI:15378"/>
        <dbReference type="ChEBI" id="CHEBI:29965"/>
        <dbReference type="ChEBI" id="CHEBI:57856"/>
        <dbReference type="ChEBI" id="CHEBI:59789"/>
        <dbReference type="ChEBI" id="CHEBI:65280"/>
        <dbReference type="EC" id="2.1.1.321"/>
    </reaction>
</comment>
<comment type="subcellular location">
    <subcellularLocation>
        <location evidence="1">Cytoplasm</location>
        <location evidence="1">Cytosol</location>
    </subcellularLocation>
    <subcellularLocation>
        <location evidence="1">Nucleus</location>
    </subcellularLocation>
</comment>
<comment type="similarity">
    <text evidence="3">Belongs to the class I-like SAM-binding methyltransferase superfamily. Protein arginine N-methyltransferase family. PRMT7 subfamily.</text>
</comment>
<gene>
    <name type="primary">prmt7</name>
</gene>
<keyword id="KW-0156">Chromatin regulator</keyword>
<keyword id="KW-0963">Cytoplasm</keyword>
<keyword id="KW-0221">Differentiation</keyword>
<keyword id="KW-0489">Methyltransferase</keyword>
<keyword id="KW-0539">Nucleus</keyword>
<keyword id="KW-1185">Reference proteome</keyword>
<keyword id="KW-0677">Repeat</keyword>
<keyword id="KW-0949">S-adenosyl-L-methionine</keyword>
<keyword id="KW-0804">Transcription</keyword>
<keyword id="KW-0805">Transcription regulation</keyword>
<keyword id="KW-0808">Transferase</keyword>
<organism>
    <name type="scientific">Xenopus laevis</name>
    <name type="common">African clawed frog</name>
    <dbReference type="NCBI Taxonomy" id="8355"/>
    <lineage>
        <taxon>Eukaryota</taxon>
        <taxon>Metazoa</taxon>
        <taxon>Chordata</taxon>
        <taxon>Craniata</taxon>
        <taxon>Vertebrata</taxon>
        <taxon>Euteleostomi</taxon>
        <taxon>Amphibia</taxon>
        <taxon>Batrachia</taxon>
        <taxon>Anura</taxon>
        <taxon>Pipoidea</taxon>
        <taxon>Pipidae</taxon>
        <taxon>Xenopodinae</taxon>
        <taxon>Xenopus</taxon>
        <taxon>Xenopus</taxon>
    </lineage>
</organism>
<reference key="1">
    <citation type="submission" date="2003-10" db="EMBL/GenBank/DDBJ databases">
        <authorList>
            <consortium name="NIH - Xenopus Gene Collection (XGC) project"/>
        </authorList>
    </citation>
    <scope>NUCLEOTIDE SEQUENCE [LARGE SCALE MRNA]</scope>
    <source>
        <tissue>Embryo</tissue>
    </source>
</reference>
<accession>Q6PCI6</accession>
<sequence length="685" mass="77291">MKVFCGRVNPTTGAMDWVEEDEHYDYHQEIARSSYADMLHDKDRNEKYYQGICAAVRRVKQRGQEAVVLDIGTGTGLLSMMAVTAGADCCYAIEVFKPMSDAAVQIVKANGFSDKIKVINKHSTEVTVGPDGDMKTKANILITELFDTELIGEGALPSYEHAQHNLMQETWEAVPHRATVFAQLVESTRLWSWNKLFPLNLETGDIKPHPELETCPGAPSVCDIQLSQLNPRDFKILSEVLCVFRVDFSCQVSSAPTSHPVHFTSLASGAAQVVLSWWEIDMDPDGSITCTMQPSWMYETQQSVPWRDHWMQCVYFLPKECSVTQGEVCCLTAHQDDYCVWYSLNKSSAENDPVCRERPTCHCGAHITWNRARFGELNDRHRTQQYFEALKKVVTPSSTCLCVSDGSLLPVLAHSLGAKQIYTLESSSIAQHLMKKLFQVNHLGEKIQVLHKSADSLITADFEDRKISTLIGEPFFTTNLLPWHNLYFWYSRTALSTNLAKDCTVLPLSASLHVVAVEFKDLWRIRSPCGMCEGFDVSIMDKMIKNSLNFRESQEAEPHPLWEYPCRALSEPIQVMTFNFTEPVPTEEIRASGSLNLVRSGQCHGAVLWMVYELTKEITVSTGLIGISEEMGECQWYPHRKQGVYFFSSILNPQTIPAQSPSSVSYSVTFIPKEGDIRMCFEPDF</sequence>